<name>CYC_YARLI</name>
<reference key="1">
    <citation type="journal article" date="2004" name="Nature">
        <title>Genome evolution in yeasts.</title>
        <authorList>
            <person name="Dujon B."/>
            <person name="Sherman D."/>
            <person name="Fischer G."/>
            <person name="Durrens P."/>
            <person name="Casaregola S."/>
            <person name="Lafontaine I."/>
            <person name="de Montigny J."/>
            <person name="Marck C."/>
            <person name="Neuveglise C."/>
            <person name="Talla E."/>
            <person name="Goffard N."/>
            <person name="Frangeul L."/>
            <person name="Aigle M."/>
            <person name="Anthouard V."/>
            <person name="Babour A."/>
            <person name="Barbe V."/>
            <person name="Barnay S."/>
            <person name="Blanchin S."/>
            <person name="Beckerich J.-M."/>
            <person name="Beyne E."/>
            <person name="Bleykasten C."/>
            <person name="Boisrame A."/>
            <person name="Boyer J."/>
            <person name="Cattolico L."/>
            <person name="Confanioleri F."/>
            <person name="de Daruvar A."/>
            <person name="Despons L."/>
            <person name="Fabre E."/>
            <person name="Fairhead C."/>
            <person name="Ferry-Dumazet H."/>
            <person name="Groppi A."/>
            <person name="Hantraye F."/>
            <person name="Hennequin C."/>
            <person name="Jauniaux N."/>
            <person name="Joyet P."/>
            <person name="Kachouri R."/>
            <person name="Kerrest A."/>
            <person name="Koszul R."/>
            <person name="Lemaire M."/>
            <person name="Lesur I."/>
            <person name="Ma L."/>
            <person name="Muller H."/>
            <person name="Nicaud J.-M."/>
            <person name="Nikolski M."/>
            <person name="Oztas S."/>
            <person name="Ozier-Kalogeropoulos O."/>
            <person name="Pellenz S."/>
            <person name="Potier S."/>
            <person name="Richard G.-F."/>
            <person name="Straub M.-L."/>
            <person name="Suleau A."/>
            <person name="Swennen D."/>
            <person name="Tekaia F."/>
            <person name="Wesolowski-Louvel M."/>
            <person name="Westhof E."/>
            <person name="Wirth B."/>
            <person name="Zeniou-Meyer M."/>
            <person name="Zivanovic Y."/>
            <person name="Bolotin-Fukuhara M."/>
            <person name="Thierry A."/>
            <person name="Bouchier C."/>
            <person name="Caudron B."/>
            <person name="Scarpelli C."/>
            <person name="Gaillardin C."/>
            <person name="Weissenbach J."/>
            <person name="Wincker P."/>
            <person name="Souciet J.-L."/>
        </authorList>
    </citation>
    <scope>NUCLEOTIDE SEQUENCE [LARGE SCALE GENOMIC DNA]</scope>
    <source>
        <strain>CLIB 122 / E 150</strain>
    </source>
</reference>
<dbReference type="EMBL" id="CR382130">
    <property type="protein sequence ID" value="CAG80800.1"/>
    <property type="molecule type" value="Genomic_DNA"/>
</dbReference>
<dbReference type="RefSeq" id="XP_502612.1">
    <property type="nucleotide sequence ID" value="XM_502612.1"/>
</dbReference>
<dbReference type="SMR" id="Q6C9Q0"/>
<dbReference type="FunCoup" id="Q6C9Q0">
    <property type="interactions" value="617"/>
</dbReference>
<dbReference type="STRING" id="284591.Q6C9Q0"/>
<dbReference type="EnsemblFungi" id="CAG80800">
    <property type="protein sequence ID" value="CAG80800"/>
    <property type="gene ID" value="YALI0_D09273g"/>
</dbReference>
<dbReference type="KEGG" id="yli:2910838"/>
<dbReference type="VEuPathDB" id="FungiDB:YALI0_D09273g"/>
<dbReference type="HOGENOM" id="CLU_060944_3_0_1"/>
<dbReference type="InParanoid" id="Q6C9Q0"/>
<dbReference type="OMA" id="MPAPYKK"/>
<dbReference type="OrthoDB" id="102489at4891"/>
<dbReference type="Proteomes" id="UP000001300">
    <property type="component" value="Chromosome D"/>
</dbReference>
<dbReference type="GO" id="GO:0005758">
    <property type="term" value="C:mitochondrial intermembrane space"/>
    <property type="evidence" value="ECO:0000318"/>
    <property type="project" value="GO_Central"/>
</dbReference>
<dbReference type="GO" id="GO:0009055">
    <property type="term" value="F:electron transfer activity"/>
    <property type="evidence" value="ECO:0000318"/>
    <property type="project" value="GO_Central"/>
</dbReference>
<dbReference type="GO" id="GO:0020037">
    <property type="term" value="F:heme binding"/>
    <property type="evidence" value="ECO:0007669"/>
    <property type="project" value="InterPro"/>
</dbReference>
<dbReference type="GO" id="GO:0046872">
    <property type="term" value="F:metal ion binding"/>
    <property type="evidence" value="ECO:0007669"/>
    <property type="project" value="UniProtKB-KW"/>
</dbReference>
<dbReference type="GO" id="GO:0006123">
    <property type="term" value="P:mitochondrial electron transport, cytochrome c to oxygen"/>
    <property type="evidence" value="ECO:0000318"/>
    <property type="project" value="GO_Central"/>
</dbReference>
<dbReference type="GO" id="GO:0006122">
    <property type="term" value="P:mitochondrial electron transport, ubiquinol to cytochrome c"/>
    <property type="evidence" value="ECO:0000318"/>
    <property type="project" value="GO_Central"/>
</dbReference>
<dbReference type="FunFam" id="1.10.760.10:FF:000001">
    <property type="entry name" value="Cytochrome c iso-1"/>
    <property type="match status" value="1"/>
</dbReference>
<dbReference type="Gene3D" id="1.10.760.10">
    <property type="entry name" value="Cytochrome c-like domain"/>
    <property type="match status" value="1"/>
</dbReference>
<dbReference type="InterPro" id="IPR009056">
    <property type="entry name" value="Cyt_c-like_dom"/>
</dbReference>
<dbReference type="InterPro" id="IPR036909">
    <property type="entry name" value="Cyt_c-like_dom_sf"/>
</dbReference>
<dbReference type="InterPro" id="IPR002327">
    <property type="entry name" value="Cyt_c_1A/1B"/>
</dbReference>
<dbReference type="PANTHER" id="PTHR11961">
    <property type="entry name" value="CYTOCHROME C"/>
    <property type="match status" value="1"/>
</dbReference>
<dbReference type="Pfam" id="PF00034">
    <property type="entry name" value="Cytochrom_C"/>
    <property type="match status" value="1"/>
</dbReference>
<dbReference type="PRINTS" id="PR00604">
    <property type="entry name" value="CYTCHRMECIAB"/>
</dbReference>
<dbReference type="SUPFAM" id="SSF46626">
    <property type="entry name" value="Cytochrome c"/>
    <property type="match status" value="1"/>
</dbReference>
<dbReference type="PROSITE" id="PS51007">
    <property type="entry name" value="CYTC"/>
    <property type="match status" value="1"/>
</dbReference>
<comment type="function">
    <text evidence="1">Electron carrier protein. The oxidized form of the cytochrome c heme group can accept an electron from the heme group of the cytochrome c1 subunit of cytochrome reductase. Cytochrome c then transfers this electron to the cytochrome oxidase complex, the final protein carrier in the mitochondrial electron-transport chain (By similarity).</text>
</comment>
<comment type="subcellular location">
    <subcellularLocation>
        <location evidence="1">Mitochondrion intermembrane space</location>
    </subcellularLocation>
    <text evidence="1">Loosely associated with the inner membrane.</text>
</comment>
<comment type="PTM">
    <text evidence="1">Binds 1 heme c group covalently per subunit.</text>
</comment>
<comment type="similarity">
    <text evidence="3">Belongs to the cytochrome c family.</text>
</comment>
<comment type="online information" name="Protein Spotlight">
    <link uri="https://www.proteinspotlight.org/back_issues/076"/>
    <text>Life shuttle - Issue 76 of November 2006</text>
</comment>
<sequence>MGYKEGSAKKGATLFKTRCAQCHTTEAGGPHKVGPNLHGVINRHSGEAEGYSYSDANKRKGIEWTTEHLFEYLENPKKYIPGTKMAFGGLKKPKDRNDLITWMVENC</sequence>
<organism>
    <name type="scientific">Yarrowia lipolytica (strain CLIB 122 / E 150)</name>
    <name type="common">Yeast</name>
    <name type="synonym">Candida lipolytica</name>
    <dbReference type="NCBI Taxonomy" id="284591"/>
    <lineage>
        <taxon>Eukaryota</taxon>
        <taxon>Fungi</taxon>
        <taxon>Dikarya</taxon>
        <taxon>Ascomycota</taxon>
        <taxon>Saccharomycotina</taxon>
        <taxon>Dipodascomycetes</taxon>
        <taxon>Dipodascales</taxon>
        <taxon>Dipodascales incertae sedis</taxon>
        <taxon>Yarrowia</taxon>
    </lineage>
</organism>
<gene>
    <name type="primary">CYC1</name>
    <name type="ordered locus">YALI0D09273g</name>
</gene>
<proteinExistence type="inferred from homology"/>
<keyword id="KW-0249">Electron transport</keyword>
<keyword id="KW-0349">Heme</keyword>
<keyword id="KW-0408">Iron</keyword>
<keyword id="KW-0479">Metal-binding</keyword>
<keyword id="KW-0488">Methylation</keyword>
<keyword id="KW-0496">Mitochondrion</keyword>
<keyword id="KW-1185">Reference proteome</keyword>
<keyword id="KW-0679">Respiratory chain</keyword>
<keyword id="KW-0813">Transport</keyword>
<feature type="chain" id="PRO_0000108336" description="Cytochrome c">
    <location>
        <begin position="1"/>
        <end position="107"/>
    </location>
</feature>
<feature type="binding site" description="covalent" evidence="2">
    <location>
        <position position="19"/>
    </location>
    <ligand>
        <name>heme c</name>
        <dbReference type="ChEBI" id="CHEBI:61717"/>
    </ligand>
</feature>
<feature type="binding site" description="covalent" evidence="2">
    <location>
        <position position="22"/>
    </location>
    <ligand>
        <name>heme c</name>
        <dbReference type="ChEBI" id="CHEBI:61717"/>
    </ligand>
</feature>
<feature type="binding site" description="axial binding residue" evidence="2">
    <location>
        <position position="23"/>
    </location>
    <ligand>
        <name>heme c</name>
        <dbReference type="ChEBI" id="CHEBI:61717"/>
    </ligand>
    <ligandPart>
        <name>Fe</name>
        <dbReference type="ChEBI" id="CHEBI:18248"/>
    </ligandPart>
</feature>
<feature type="binding site" description="axial binding residue" evidence="2">
    <location>
        <position position="85"/>
    </location>
    <ligand>
        <name>heme c</name>
        <dbReference type="ChEBI" id="CHEBI:61717"/>
    </ligand>
    <ligandPart>
        <name>Fe</name>
        <dbReference type="ChEBI" id="CHEBI:18248"/>
    </ligandPart>
</feature>
<feature type="modified residue" description="N6,N6,N6-trimethyllysine" evidence="1">
    <location>
        <position position="77"/>
    </location>
</feature>
<protein>
    <recommendedName>
        <fullName>Cytochrome c</fullName>
    </recommendedName>
</protein>
<evidence type="ECO:0000250" key="1"/>
<evidence type="ECO:0000255" key="2">
    <source>
        <dbReference type="PROSITE-ProRule" id="PRU00433"/>
    </source>
</evidence>
<evidence type="ECO:0000305" key="3"/>
<accession>Q6C9Q0</accession>